<proteinExistence type="inferred from homology"/>
<gene>
    <name evidence="1" type="primary">rpmJ1</name>
    <name type="synonym">rpmJ</name>
    <name type="ordered locus">YPO0230</name>
    <name type="ordered locus">y4010.1</name>
    <name type="ordered locus">YP_0228</name>
</gene>
<keyword id="KW-1185">Reference proteome</keyword>
<keyword id="KW-0687">Ribonucleoprotein</keyword>
<keyword id="KW-0689">Ribosomal protein</keyword>
<feature type="chain" id="PRO_0000126302" description="Large ribosomal subunit protein bL36A">
    <location>
        <begin position="1"/>
        <end position="38"/>
    </location>
</feature>
<sequence length="38" mass="4349">MKVRASVKKLCRNCKIVKRNGVVRVICSAEPKHKQRQG</sequence>
<protein>
    <recommendedName>
        <fullName evidence="1">Large ribosomal subunit protein bL36A</fullName>
    </recommendedName>
    <alternativeName>
        <fullName evidence="2">50S ribosomal protein L36 1</fullName>
    </alternativeName>
</protein>
<reference key="1">
    <citation type="journal article" date="2001" name="Nature">
        <title>Genome sequence of Yersinia pestis, the causative agent of plague.</title>
        <authorList>
            <person name="Parkhill J."/>
            <person name="Wren B.W."/>
            <person name="Thomson N.R."/>
            <person name="Titball R.W."/>
            <person name="Holden M.T.G."/>
            <person name="Prentice M.B."/>
            <person name="Sebaihia M."/>
            <person name="James K.D."/>
            <person name="Churcher C.M."/>
            <person name="Mungall K.L."/>
            <person name="Baker S."/>
            <person name="Basham D."/>
            <person name="Bentley S.D."/>
            <person name="Brooks K."/>
            <person name="Cerdeno-Tarraga A.-M."/>
            <person name="Chillingworth T."/>
            <person name="Cronin A."/>
            <person name="Davies R.M."/>
            <person name="Davis P."/>
            <person name="Dougan G."/>
            <person name="Feltwell T."/>
            <person name="Hamlin N."/>
            <person name="Holroyd S."/>
            <person name="Jagels K."/>
            <person name="Karlyshev A.V."/>
            <person name="Leather S."/>
            <person name="Moule S."/>
            <person name="Oyston P.C.F."/>
            <person name="Quail M.A."/>
            <person name="Rutherford K.M."/>
            <person name="Simmonds M."/>
            <person name="Skelton J."/>
            <person name="Stevens K."/>
            <person name="Whitehead S."/>
            <person name="Barrell B.G."/>
        </authorList>
    </citation>
    <scope>NUCLEOTIDE SEQUENCE [LARGE SCALE GENOMIC DNA]</scope>
    <source>
        <strain>CO-92 / Biovar Orientalis</strain>
    </source>
</reference>
<reference key="2">
    <citation type="journal article" date="2002" name="J. Bacteriol.">
        <title>Genome sequence of Yersinia pestis KIM.</title>
        <authorList>
            <person name="Deng W."/>
            <person name="Burland V."/>
            <person name="Plunkett G. III"/>
            <person name="Boutin A."/>
            <person name="Mayhew G.F."/>
            <person name="Liss P."/>
            <person name="Perna N.T."/>
            <person name="Rose D.J."/>
            <person name="Mau B."/>
            <person name="Zhou S."/>
            <person name="Schwartz D.C."/>
            <person name="Fetherston J.D."/>
            <person name="Lindler L.E."/>
            <person name="Brubaker R.R."/>
            <person name="Plano G.V."/>
            <person name="Straley S.C."/>
            <person name="McDonough K.A."/>
            <person name="Nilles M.L."/>
            <person name="Matson J.S."/>
            <person name="Blattner F.R."/>
            <person name="Perry R.D."/>
        </authorList>
    </citation>
    <scope>NUCLEOTIDE SEQUENCE [LARGE SCALE GENOMIC DNA]</scope>
    <source>
        <strain>KIM10+ / Biovar Mediaevalis</strain>
    </source>
</reference>
<reference key="3">
    <citation type="journal article" date="2004" name="DNA Res.">
        <title>Complete genome sequence of Yersinia pestis strain 91001, an isolate avirulent to humans.</title>
        <authorList>
            <person name="Song Y."/>
            <person name="Tong Z."/>
            <person name="Wang J."/>
            <person name="Wang L."/>
            <person name="Guo Z."/>
            <person name="Han Y."/>
            <person name="Zhang J."/>
            <person name="Pei D."/>
            <person name="Zhou D."/>
            <person name="Qin H."/>
            <person name="Pang X."/>
            <person name="Han Y."/>
            <person name="Zhai J."/>
            <person name="Li M."/>
            <person name="Cui B."/>
            <person name="Qi Z."/>
            <person name="Jin L."/>
            <person name="Dai R."/>
            <person name="Chen F."/>
            <person name="Li S."/>
            <person name="Ye C."/>
            <person name="Du Z."/>
            <person name="Lin W."/>
            <person name="Wang J."/>
            <person name="Yu J."/>
            <person name="Yang H."/>
            <person name="Wang J."/>
            <person name="Huang P."/>
            <person name="Yang R."/>
        </authorList>
    </citation>
    <scope>NUCLEOTIDE SEQUENCE [LARGE SCALE GENOMIC DNA]</scope>
    <source>
        <strain>91001 / Biovar Mediaevalis</strain>
    </source>
</reference>
<accession>Q8ZJ91</accession>
<accession>Q0WK77</accession>
<comment type="similarity">
    <text evidence="1">Belongs to the bacterial ribosomal protein bL36 family.</text>
</comment>
<organism>
    <name type="scientific">Yersinia pestis</name>
    <dbReference type="NCBI Taxonomy" id="632"/>
    <lineage>
        <taxon>Bacteria</taxon>
        <taxon>Pseudomonadati</taxon>
        <taxon>Pseudomonadota</taxon>
        <taxon>Gammaproteobacteria</taxon>
        <taxon>Enterobacterales</taxon>
        <taxon>Yersiniaceae</taxon>
        <taxon>Yersinia</taxon>
    </lineage>
</organism>
<dbReference type="EMBL" id="AL590842">
    <property type="protein sequence ID" value="CAL18913.1"/>
    <property type="molecule type" value="Genomic_DNA"/>
</dbReference>
<dbReference type="EMBL" id="AE009952">
    <property type="status" value="NOT_ANNOTATED_CDS"/>
    <property type="molecule type" value="Genomic_DNA"/>
</dbReference>
<dbReference type="EMBL" id="AE017042">
    <property type="protein sequence ID" value="AAS60504.1"/>
    <property type="molecule type" value="Genomic_DNA"/>
</dbReference>
<dbReference type="PIR" id="AG0028">
    <property type="entry name" value="AG0028"/>
</dbReference>
<dbReference type="RefSeq" id="WP_002227352.1">
    <property type="nucleotide sequence ID" value="NZ_WUCM01000078.1"/>
</dbReference>
<dbReference type="RefSeq" id="YP_002345311.1">
    <property type="nucleotide sequence ID" value="NC_003143.1"/>
</dbReference>
<dbReference type="SMR" id="Q8ZJ91"/>
<dbReference type="STRING" id="214092.YPO0230"/>
<dbReference type="PaxDb" id="214092-YPO0230"/>
<dbReference type="EnsemblBacteria" id="AAS60504">
    <property type="protein sequence ID" value="AAS60504"/>
    <property type="gene ID" value="YP_0228"/>
</dbReference>
<dbReference type="GeneID" id="98190585"/>
<dbReference type="KEGG" id="ype:YPO0230"/>
<dbReference type="KEGG" id="ypm:YP_0228"/>
<dbReference type="eggNOG" id="COG0257">
    <property type="taxonomic scope" value="Bacteria"/>
</dbReference>
<dbReference type="HOGENOM" id="CLU_135723_6_2_6"/>
<dbReference type="OrthoDB" id="9802520at2"/>
<dbReference type="Proteomes" id="UP000000815">
    <property type="component" value="Chromosome"/>
</dbReference>
<dbReference type="Proteomes" id="UP000001019">
    <property type="component" value="Chromosome"/>
</dbReference>
<dbReference type="Proteomes" id="UP000002490">
    <property type="component" value="Chromosome"/>
</dbReference>
<dbReference type="GO" id="GO:0005737">
    <property type="term" value="C:cytoplasm"/>
    <property type="evidence" value="ECO:0007669"/>
    <property type="project" value="UniProtKB-ARBA"/>
</dbReference>
<dbReference type="GO" id="GO:1990904">
    <property type="term" value="C:ribonucleoprotein complex"/>
    <property type="evidence" value="ECO:0007669"/>
    <property type="project" value="UniProtKB-KW"/>
</dbReference>
<dbReference type="GO" id="GO:0005840">
    <property type="term" value="C:ribosome"/>
    <property type="evidence" value="ECO:0007669"/>
    <property type="project" value="UniProtKB-KW"/>
</dbReference>
<dbReference type="GO" id="GO:0003735">
    <property type="term" value="F:structural constituent of ribosome"/>
    <property type="evidence" value="ECO:0007669"/>
    <property type="project" value="InterPro"/>
</dbReference>
<dbReference type="GO" id="GO:0006412">
    <property type="term" value="P:translation"/>
    <property type="evidence" value="ECO:0007669"/>
    <property type="project" value="UniProtKB-UniRule"/>
</dbReference>
<dbReference type="HAMAP" id="MF_00251">
    <property type="entry name" value="Ribosomal_bL36"/>
    <property type="match status" value="1"/>
</dbReference>
<dbReference type="InterPro" id="IPR000473">
    <property type="entry name" value="Ribosomal_bL36"/>
</dbReference>
<dbReference type="InterPro" id="IPR035977">
    <property type="entry name" value="Ribosomal_bL36_sp"/>
</dbReference>
<dbReference type="NCBIfam" id="TIGR01022">
    <property type="entry name" value="rpmJ_bact"/>
    <property type="match status" value="1"/>
</dbReference>
<dbReference type="PANTHER" id="PTHR42888">
    <property type="entry name" value="50S RIBOSOMAL PROTEIN L36, CHLOROPLASTIC"/>
    <property type="match status" value="1"/>
</dbReference>
<dbReference type="PANTHER" id="PTHR42888:SF1">
    <property type="entry name" value="LARGE RIBOSOMAL SUBUNIT PROTEIN BL36C"/>
    <property type="match status" value="1"/>
</dbReference>
<dbReference type="Pfam" id="PF00444">
    <property type="entry name" value="Ribosomal_L36"/>
    <property type="match status" value="1"/>
</dbReference>
<dbReference type="SUPFAM" id="SSF57840">
    <property type="entry name" value="Ribosomal protein L36"/>
    <property type="match status" value="1"/>
</dbReference>
<dbReference type="PROSITE" id="PS00828">
    <property type="entry name" value="RIBOSOMAL_L36"/>
    <property type="match status" value="1"/>
</dbReference>
<evidence type="ECO:0000255" key="1">
    <source>
        <dbReference type="HAMAP-Rule" id="MF_00251"/>
    </source>
</evidence>
<evidence type="ECO:0000305" key="2"/>
<name>RL361_YERPE</name>